<evidence type="ECO:0000250" key="1"/>
<evidence type="ECO:0000255" key="2">
    <source>
        <dbReference type="HAMAP-Rule" id="MF_01057"/>
    </source>
</evidence>
<reference key="1">
    <citation type="journal article" date="2008" name="J. Bacteriol.">
        <title>Genome sequence of Staphylococcus aureus strain Newman and comparative analysis of staphylococcal genomes: polymorphism and evolution of two major pathogenicity islands.</title>
        <authorList>
            <person name="Baba T."/>
            <person name="Bae T."/>
            <person name="Schneewind O."/>
            <person name="Takeuchi F."/>
            <person name="Hiramatsu K."/>
        </authorList>
    </citation>
    <scope>NUCLEOTIDE SEQUENCE [LARGE SCALE GENOMIC DNA]</scope>
    <source>
        <strain>Newman</strain>
    </source>
</reference>
<accession>A6QHT1</accession>
<organism>
    <name type="scientific">Staphylococcus aureus (strain Newman)</name>
    <dbReference type="NCBI Taxonomy" id="426430"/>
    <lineage>
        <taxon>Bacteria</taxon>
        <taxon>Bacillati</taxon>
        <taxon>Bacillota</taxon>
        <taxon>Bacilli</taxon>
        <taxon>Bacillales</taxon>
        <taxon>Staphylococcaceae</taxon>
        <taxon>Staphylococcus</taxon>
    </lineage>
</organism>
<gene>
    <name evidence="2" type="primary">trmB</name>
    <name type="ordered locus">NWMN_1641</name>
</gene>
<feature type="chain" id="PRO_1000136364" description="tRNA (guanine-N(7)-)-methyltransferase">
    <location>
        <begin position="1"/>
        <end position="214"/>
    </location>
</feature>
<feature type="active site" evidence="1">
    <location>
        <position position="117"/>
    </location>
</feature>
<feature type="binding site" evidence="2">
    <location>
        <position position="43"/>
    </location>
    <ligand>
        <name>S-adenosyl-L-methionine</name>
        <dbReference type="ChEBI" id="CHEBI:59789"/>
    </ligand>
</feature>
<feature type="binding site" evidence="2">
    <location>
        <position position="68"/>
    </location>
    <ligand>
        <name>S-adenosyl-L-methionine</name>
        <dbReference type="ChEBI" id="CHEBI:59789"/>
    </ligand>
</feature>
<feature type="binding site" evidence="2">
    <location>
        <position position="95"/>
    </location>
    <ligand>
        <name>S-adenosyl-L-methionine</name>
        <dbReference type="ChEBI" id="CHEBI:59789"/>
    </ligand>
</feature>
<feature type="binding site" evidence="2">
    <location>
        <position position="117"/>
    </location>
    <ligand>
        <name>S-adenosyl-L-methionine</name>
        <dbReference type="ChEBI" id="CHEBI:59789"/>
    </ligand>
</feature>
<feature type="binding site" evidence="2">
    <location>
        <position position="121"/>
    </location>
    <ligand>
        <name>substrate</name>
    </ligand>
</feature>
<feature type="binding site" evidence="2">
    <location>
        <position position="153"/>
    </location>
    <ligand>
        <name>substrate</name>
    </ligand>
</feature>
<feature type="binding site" evidence="2">
    <location>
        <begin position="190"/>
        <end position="193"/>
    </location>
    <ligand>
        <name>substrate</name>
    </ligand>
</feature>
<sequence length="214" mass="25275">MRVRYKPWAKDYLKDHPELVDMDGQHAGKMTEWFDKTQPIHIEIGSGMGQFITTLAAQNPHINYISMEREKSIVYKVLDKVKEMGLTNLKIICNDAIELNEYFKDGEVSRIYLNFSDPWPKNRHAKRRLTYHTFLALYQQILNDEGDLHFKTDNRGLFAYSLESMSQFGMYFTKINLNLHQEDDGSNILTEYEKKFSDKGSRIYRMEAKFHSQK</sequence>
<keyword id="KW-0489">Methyltransferase</keyword>
<keyword id="KW-0949">S-adenosyl-L-methionine</keyword>
<keyword id="KW-0808">Transferase</keyword>
<keyword id="KW-0819">tRNA processing</keyword>
<protein>
    <recommendedName>
        <fullName evidence="2">tRNA (guanine-N(7)-)-methyltransferase</fullName>
        <ecNumber evidence="2">2.1.1.33</ecNumber>
    </recommendedName>
    <alternativeName>
        <fullName evidence="2">tRNA (guanine(46)-N(7))-methyltransferase</fullName>
    </alternativeName>
    <alternativeName>
        <fullName evidence="2">tRNA(m7G46)-methyltransferase</fullName>
    </alternativeName>
</protein>
<name>TRMB_STAAE</name>
<dbReference type="EC" id="2.1.1.33" evidence="2"/>
<dbReference type="EMBL" id="AP009351">
    <property type="protein sequence ID" value="BAF67913.1"/>
    <property type="molecule type" value="Genomic_DNA"/>
</dbReference>
<dbReference type="RefSeq" id="WP_001266167.1">
    <property type="nucleotide sequence ID" value="NZ_JBBIAE010000009.1"/>
</dbReference>
<dbReference type="SMR" id="A6QHT1"/>
<dbReference type="KEGG" id="sae:NWMN_1641"/>
<dbReference type="HOGENOM" id="CLU_050910_2_1_9"/>
<dbReference type="UniPathway" id="UPA00989"/>
<dbReference type="Proteomes" id="UP000006386">
    <property type="component" value="Chromosome"/>
</dbReference>
<dbReference type="GO" id="GO:0043527">
    <property type="term" value="C:tRNA methyltransferase complex"/>
    <property type="evidence" value="ECO:0007669"/>
    <property type="project" value="TreeGrafter"/>
</dbReference>
<dbReference type="GO" id="GO:0008176">
    <property type="term" value="F:tRNA (guanine(46)-N7)-methyltransferase activity"/>
    <property type="evidence" value="ECO:0007669"/>
    <property type="project" value="UniProtKB-UniRule"/>
</dbReference>
<dbReference type="CDD" id="cd02440">
    <property type="entry name" value="AdoMet_MTases"/>
    <property type="match status" value="1"/>
</dbReference>
<dbReference type="FunFam" id="3.40.50.150:FF:000035">
    <property type="entry name" value="tRNA (guanine-N(7)-)-methyltransferase"/>
    <property type="match status" value="1"/>
</dbReference>
<dbReference type="Gene3D" id="3.40.50.150">
    <property type="entry name" value="Vaccinia Virus protein VP39"/>
    <property type="match status" value="1"/>
</dbReference>
<dbReference type="HAMAP" id="MF_01057">
    <property type="entry name" value="tRNA_methyltr_TrmB"/>
    <property type="match status" value="1"/>
</dbReference>
<dbReference type="InterPro" id="IPR029063">
    <property type="entry name" value="SAM-dependent_MTases_sf"/>
</dbReference>
<dbReference type="InterPro" id="IPR003358">
    <property type="entry name" value="tRNA_(Gua-N-7)_MeTrfase_Trmb"/>
</dbReference>
<dbReference type="InterPro" id="IPR055361">
    <property type="entry name" value="tRNA_methyltr_TrmB_bact"/>
</dbReference>
<dbReference type="NCBIfam" id="NF001080">
    <property type="entry name" value="PRK00121.2-2"/>
    <property type="match status" value="1"/>
</dbReference>
<dbReference type="NCBIfam" id="TIGR00091">
    <property type="entry name" value="tRNA (guanosine(46)-N7)-methyltransferase TrmB"/>
    <property type="match status" value="1"/>
</dbReference>
<dbReference type="PANTHER" id="PTHR23417">
    <property type="entry name" value="3-DEOXY-D-MANNO-OCTULOSONIC-ACID TRANSFERASE/TRNA GUANINE-N 7 - -METHYLTRANSFERASE"/>
    <property type="match status" value="1"/>
</dbReference>
<dbReference type="PANTHER" id="PTHR23417:SF14">
    <property type="entry name" value="PENTACOTRIPEPTIDE-REPEAT REGION OF PRORP DOMAIN-CONTAINING PROTEIN"/>
    <property type="match status" value="1"/>
</dbReference>
<dbReference type="Pfam" id="PF02390">
    <property type="entry name" value="Methyltransf_4"/>
    <property type="match status" value="1"/>
</dbReference>
<dbReference type="SUPFAM" id="SSF53335">
    <property type="entry name" value="S-adenosyl-L-methionine-dependent methyltransferases"/>
    <property type="match status" value="1"/>
</dbReference>
<dbReference type="PROSITE" id="PS51625">
    <property type="entry name" value="SAM_MT_TRMB"/>
    <property type="match status" value="1"/>
</dbReference>
<proteinExistence type="inferred from homology"/>
<comment type="function">
    <text evidence="2">Catalyzes the formation of N(7)-methylguanine at position 46 (m7G46) in tRNA.</text>
</comment>
<comment type="catalytic activity">
    <reaction evidence="2">
        <text>guanosine(46) in tRNA + S-adenosyl-L-methionine = N(7)-methylguanosine(46) in tRNA + S-adenosyl-L-homocysteine</text>
        <dbReference type="Rhea" id="RHEA:42708"/>
        <dbReference type="Rhea" id="RHEA-COMP:10188"/>
        <dbReference type="Rhea" id="RHEA-COMP:10189"/>
        <dbReference type="ChEBI" id="CHEBI:57856"/>
        <dbReference type="ChEBI" id="CHEBI:59789"/>
        <dbReference type="ChEBI" id="CHEBI:74269"/>
        <dbReference type="ChEBI" id="CHEBI:74480"/>
        <dbReference type="EC" id="2.1.1.33"/>
    </reaction>
</comment>
<comment type="pathway">
    <text evidence="2">tRNA modification; N(7)-methylguanine-tRNA biosynthesis.</text>
</comment>
<comment type="similarity">
    <text evidence="2">Belongs to the class I-like SAM-binding methyltransferase superfamily. TrmB family.</text>
</comment>